<protein>
    <recommendedName>
        <fullName evidence="5">Evasin P1100</fullName>
    </recommendedName>
</protein>
<accession>A0A0K8R556</accession>
<sequence length="96" mass="10339">MAFNVITFLQFSVFVVILFNINLHSASAGSKGSSASQSSDNSVVAKFCDTNCTINEGGKWTECKGGCFCVHVGNETVGRCMKLDGDYDYPSPKPEE</sequence>
<keyword id="KW-1015">Disulfide bond</keyword>
<keyword id="KW-0325">Glycoprotein</keyword>
<keyword id="KW-0964">Secreted</keyword>
<keyword id="KW-0732">Signal</keyword>
<dbReference type="EMBL" id="GADI01007511">
    <property type="protein sequence ID" value="JAA66297.1"/>
    <property type="molecule type" value="mRNA"/>
</dbReference>
<dbReference type="SMR" id="A0A0K8R556"/>
<dbReference type="GO" id="GO:0005576">
    <property type="term" value="C:extracellular region"/>
    <property type="evidence" value="ECO:0007669"/>
    <property type="project" value="UniProtKB-SubCell"/>
</dbReference>
<dbReference type="GO" id="GO:0019958">
    <property type="term" value="F:C-X-C chemokine binding"/>
    <property type="evidence" value="ECO:0000314"/>
    <property type="project" value="UniProtKB"/>
</dbReference>
<organism evidence="7">
    <name type="scientific">Ixodes ricinus</name>
    <name type="common">Common tick</name>
    <name type="synonym">Acarus ricinus</name>
    <dbReference type="NCBI Taxonomy" id="34613"/>
    <lineage>
        <taxon>Eukaryota</taxon>
        <taxon>Metazoa</taxon>
        <taxon>Ecdysozoa</taxon>
        <taxon>Arthropoda</taxon>
        <taxon>Chelicerata</taxon>
        <taxon>Arachnida</taxon>
        <taxon>Acari</taxon>
        <taxon>Parasitiformes</taxon>
        <taxon>Ixodida</taxon>
        <taxon>Ixodoidea</taxon>
        <taxon>Ixodidae</taxon>
        <taxon>Ixodinae</taxon>
        <taxon>Ixodes</taxon>
    </lineage>
</organism>
<reference evidence="7" key="1">
    <citation type="journal article" date="2013" name="FASEB J.">
        <title>De novo Ixodes ricinus salivary gland transcriptome analysis using two next-generation sequencing methodologies.</title>
        <authorList>
            <person name="Schwarz A."/>
            <person name="von Reumont B.M."/>
            <person name="Erhart J."/>
            <person name="Chagas A.C."/>
            <person name="Ribeiro J.M."/>
            <person name="Kotsyfakis M."/>
        </authorList>
    </citation>
    <scope>NUCLEOTIDE SEQUENCE [LARGE SCALE MRNA]</scope>
    <source>
        <tissue evidence="7">Salivary gland</tissue>
    </source>
</reference>
<reference evidence="6" key="2">
    <citation type="journal article" date="2019" name="J. Biol. Chem.">
        <title>A knottin scaffold directs the CXC-chemokine-binding specificity of tick evasins.</title>
        <authorList>
            <person name="Lee A.W."/>
            <person name="Deruaz M."/>
            <person name="Lynch C."/>
            <person name="Davies G."/>
            <person name="Singh K."/>
            <person name="Alenazi Y."/>
            <person name="Eaton J.R.O."/>
            <person name="Kawamura A."/>
            <person name="Shaw J."/>
            <person name="Proudfoot A.E.I."/>
            <person name="Dias J.M."/>
            <person name="Bhattacharya S."/>
        </authorList>
    </citation>
    <scope>FUNCTION</scope>
</reference>
<comment type="function">
    <text evidence="4">Salivary chemokine-binding protein which binds to host chemokines CXCL1, CXCL2, CXCL3, CXCL5, CXCL6, CXCL10, CXCL11 and CXCL13.</text>
</comment>
<comment type="subcellular location">
    <subcellularLocation>
        <location evidence="6">Secreted</location>
    </subcellularLocation>
</comment>
<feature type="signal peptide" evidence="2">
    <location>
        <begin position="1"/>
        <end position="28"/>
    </location>
</feature>
<feature type="chain" id="PRO_5005516003" description="Evasin P1100" evidence="2">
    <location>
        <begin position="29"/>
        <end position="96"/>
    </location>
</feature>
<feature type="glycosylation site" description="N-linked (GlcNAc...) asparagine" evidence="3">
    <location>
        <position position="51"/>
    </location>
</feature>
<feature type="glycosylation site" description="N-linked (GlcNAc...) asparagine" evidence="3">
    <location>
        <position position="74"/>
    </location>
</feature>
<feature type="disulfide bond" evidence="1">
    <location>
        <begin position="48"/>
        <end position="67"/>
    </location>
</feature>
<feature type="disulfide bond" evidence="1">
    <location>
        <begin position="52"/>
        <end position="69"/>
    </location>
</feature>
<feature type="disulfide bond" evidence="1">
    <location>
        <begin position="63"/>
        <end position="80"/>
    </location>
</feature>
<proteinExistence type="inferred from homology"/>
<evidence type="ECO:0000250" key="1">
    <source>
        <dbReference type="UniProtKB" id="P0C8E8"/>
    </source>
</evidence>
<evidence type="ECO:0000255" key="2"/>
<evidence type="ECO:0000255" key="3">
    <source>
        <dbReference type="PROSITE-ProRule" id="PRU00498"/>
    </source>
</evidence>
<evidence type="ECO:0000269" key="4">
    <source>
    </source>
</evidence>
<evidence type="ECO:0000303" key="5">
    <source>
    </source>
</evidence>
<evidence type="ECO:0000305" key="6"/>
<evidence type="ECO:0000312" key="7">
    <source>
        <dbReference type="EMBL" id="JAA66297.1"/>
    </source>
</evidence>
<name>E1100_IXORI</name>